<organism>
    <name type="scientific">Gallus gallus</name>
    <name type="common">Chicken</name>
    <dbReference type="NCBI Taxonomy" id="9031"/>
    <lineage>
        <taxon>Eukaryota</taxon>
        <taxon>Metazoa</taxon>
        <taxon>Chordata</taxon>
        <taxon>Craniata</taxon>
        <taxon>Vertebrata</taxon>
        <taxon>Euteleostomi</taxon>
        <taxon>Archelosauria</taxon>
        <taxon>Archosauria</taxon>
        <taxon>Dinosauria</taxon>
        <taxon>Saurischia</taxon>
        <taxon>Theropoda</taxon>
        <taxon>Coelurosauria</taxon>
        <taxon>Aves</taxon>
        <taxon>Neognathae</taxon>
        <taxon>Galloanserae</taxon>
        <taxon>Galliformes</taxon>
        <taxon>Phasianidae</taxon>
        <taxon>Phasianinae</taxon>
        <taxon>Gallus</taxon>
    </lineage>
</organism>
<accession>F1P065</accession>
<evidence type="ECO:0000250" key="1"/>
<evidence type="ECO:0000255" key="2">
    <source>
        <dbReference type="PROSITE-ProRule" id="PRU00062"/>
    </source>
</evidence>
<evidence type="ECO:0000255" key="3">
    <source>
        <dbReference type="PROSITE-ProRule" id="PRU00084"/>
    </source>
</evidence>
<evidence type="ECO:0000255" key="4">
    <source>
        <dbReference type="PROSITE-ProRule" id="PRU00145"/>
    </source>
</evidence>
<evidence type="ECO:0000256" key="5">
    <source>
        <dbReference type="SAM" id="MobiDB-lite"/>
    </source>
</evidence>
<evidence type="ECO:0000269" key="6">
    <source>
    </source>
</evidence>
<keyword id="KW-1003">Cell membrane</keyword>
<keyword id="KW-0966">Cell projection</keyword>
<keyword id="KW-0963">Cytoplasm</keyword>
<keyword id="KW-0217">Developmental protein</keyword>
<keyword id="KW-0344">Guanine-nucleotide releasing factor</keyword>
<keyword id="KW-0472">Membrane</keyword>
<keyword id="KW-1185">Reference proteome</keyword>
<keyword id="KW-0677">Repeat</keyword>
<keyword id="KW-0770">Synapse</keyword>
<keyword id="KW-0771">Synaptosome</keyword>
<reference key="1">
    <citation type="journal article" date="2004" name="Nature">
        <title>Sequence and comparative analysis of the chicken genome provide unique perspectives on vertebrate evolution.</title>
        <authorList>
            <person name="Hillier L.W."/>
            <person name="Miller W."/>
            <person name="Birney E."/>
            <person name="Warren W."/>
            <person name="Hardison R.C."/>
            <person name="Ponting C.P."/>
            <person name="Bork P."/>
            <person name="Burt D.W."/>
            <person name="Groenen M.A.M."/>
            <person name="Delany M.E."/>
            <person name="Dodgson J.B."/>
            <person name="Chinwalla A.T."/>
            <person name="Cliften P.F."/>
            <person name="Clifton S.W."/>
            <person name="Delehaunty K.D."/>
            <person name="Fronick C."/>
            <person name="Fulton R.S."/>
            <person name="Graves T.A."/>
            <person name="Kremitzki C."/>
            <person name="Layman D."/>
            <person name="Magrini V."/>
            <person name="McPherson J.D."/>
            <person name="Miner T.L."/>
            <person name="Minx P."/>
            <person name="Nash W.E."/>
            <person name="Nhan M.N."/>
            <person name="Nelson J.O."/>
            <person name="Oddy L.G."/>
            <person name="Pohl C.S."/>
            <person name="Randall-Maher J."/>
            <person name="Smith S.M."/>
            <person name="Wallis J.W."/>
            <person name="Yang S.-P."/>
            <person name="Romanov M.N."/>
            <person name="Rondelli C.M."/>
            <person name="Paton B."/>
            <person name="Smith J."/>
            <person name="Morrice D."/>
            <person name="Daniels L."/>
            <person name="Tempest H.G."/>
            <person name="Robertson L."/>
            <person name="Masabanda J.S."/>
            <person name="Griffin D.K."/>
            <person name="Vignal A."/>
            <person name="Fillon V."/>
            <person name="Jacobbson L."/>
            <person name="Kerje S."/>
            <person name="Andersson L."/>
            <person name="Crooijmans R.P."/>
            <person name="Aerts J."/>
            <person name="van der Poel J.J."/>
            <person name="Ellegren H."/>
            <person name="Caldwell R.B."/>
            <person name="Hubbard S.J."/>
            <person name="Grafham D.V."/>
            <person name="Kierzek A.M."/>
            <person name="McLaren S.R."/>
            <person name="Overton I.M."/>
            <person name="Arakawa H."/>
            <person name="Beattie K.J."/>
            <person name="Bezzubov Y."/>
            <person name="Boardman P.E."/>
            <person name="Bonfield J.K."/>
            <person name="Croning M.D.R."/>
            <person name="Davies R.M."/>
            <person name="Francis M.D."/>
            <person name="Humphray S.J."/>
            <person name="Scott C.E."/>
            <person name="Taylor R.G."/>
            <person name="Tickle C."/>
            <person name="Brown W.R.A."/>
            <person name="Rogers J."/>
            <person name="Buerstedde J.-M."/>
            <person name="Wilson S.A."/>
            <person name="Stubbs L."/>
            <person name="Ovcharenko I."/>
            <person name="Gordon L."/>
            <person name="Lucas S."/>
            <person name="Miller M.M."/>
            <person name="Inoko H."/>
            <person name="Shiina T."/>
            <person name="Kaufman J."/>
            <person name="Salomonsen J."/>
            <person name="Skjoedt K."/>
            <person name="Wong G.K.-S."/>
            <person name="Wang J."/>
            <person name="Liu B."/>
            <person name="Wang J."/>
            <person name="Yu J."/>
            <person name="Yang H."/>
            <person name="Nefedov M."/>
            <person name="Koriabine M."/>
            <person name="Dejong P.J."/>
            <person name="Goodstadt L."/>
            <person name="Webber C."/>
            <person name="Dickens N.J."/>
            <person name="Letunic I."/>
            <person name="Suyama M."/>
            <person name="Torrents D."/>
            <person name="von Mering C."/>
            <person name="Zdobnov E.M."/>
            <person name="Makova K."/>
            <person name="Nekrutenko A."/>
            <person name="Elnitski L."/>
            <person name="Eswara P."/>
            <person name="King D.C."/>
            <person name="Yang S.-P."/>
            <person name="Tyekucheva S."/>
            <person name="Radakrishnan A."/>
            <person name="Harris R.S."/>
            <person name="Chiaromonte F."/>
            <person name="Taylor J."/>
            <person name="He J."/>
            <person name="Rijnkels M."/>
            <person name="Griffiths-Jones S."/>
            <person name="Ureta-Vidal A."/>
            <person name="Hoffman M.M."/>
            <person name="Severin J."/>
            <person name="Searle S.M.J."/>
            <person name="Law A.S."/>
            <person name="Speed D."/>
            <person name="Waddington D."/>
            <person name="Cheng Z."/>
            <person name="Tuzun E."/>
            <person name="Eichler E."/>
            <person name="Bao Z."/>
            <person name="Flicek P."/>
            <person name="Shteynberg D.D."/>
            <person name="Brent M.R."/>
            <person name="Bye J.M."/>
            <person name="Huckle E.J."/>
            <person name="Chatterji S."/>
            <person name="Dewey C."/>
            <person name="Pachter L."/>
            <person name="Kouranov A."/>
            <person name="Mourelatos Z."/>
            <person name="Hatzigeorgiou A.G."/>
            <person name="Paterson A.H."/>
            <person name="Ivarie R."/>
            <person name="Brandstrom M."/>
            <person name="Axelsson E."/>
            <person name="Backstrom N."/>
            <person name="Berlin S."/>
            <person name="Webster M.T."/>
            <person name="Pourquie O."/>
            <person name="Reymond A."/>
            <person name="Ucla C."/>
            <person name="Antonarakis S.E."/>
            <person name="Long M."/>
            <person name="Emerson J.J."/>
            <person name="Betran E."/>
            <person name="Dupanloup I."/>
            <person name="Kaessmann H."/>
            <person name="Hinrichs A.S."/>
            <person name="Bejerano G."/>
            <person name="Furey T.S."/>
            <person name="Harte R.A."/>
            <person name="Raney B."/>
            <person name="Siepel A."/>
            <person name="Kent W.J."/>
            <person name="Haussler D."/>
            <person name="Eyras E."/>
            <person name="Castelo R."/>
            <person name="Abril J.F."/>
            <person name="Castellano S."/>
            <person name="Camara F."/>
            <person name="Parra G."/>
            <person name="Guigo R."/>
            <person name="Bourque G."/>
            <person name="Tesler G."/>
            <person name="Pevzner P.A."/>
            <person name="Smit A."/>
            <person name="Fulton L.A."/>
            <person name="Mardis E.R."/>
            <person name="Wilson R.K."/>
        </authorList>
    </citation>
    <scope>NUCLEOTIDE SEQUENCE [LARGE SCALE GENOMIC DNA]</scope>
    <source>
        <strain>Red jungle fowl</strain>
    </source>
</reference>
<reference key="2">
    <citation type="submission" date="2004-03" db="EMBL/GenBank/DDBJ databases">
        <authorList>
            <person name="Boardman P.E."/>
            <person name="Bonfield J.K."/>
            <person name="Brown W.R.A."/>
            <person name="Carder C."/>
            <person name="Chalk S.E."/>
            <person name="Croning M.D.R."/>
            <person name="Davies R.M."/>
            <person name="Francis M.D."/>
            <person name="Grafham D.V."/>
            <person name="Hubbard S.J."/>
            <person name="Humphray S.J."/>
            <person name="Hunt P.J."/>
            <person name="Maddison M."/>
            <person name="McLaren S.R."/>
            <person name="Niblett D."/>
            <person name="Overton I.M."/>
            <person name="Rogers J."/>
            <person name="Scott C.E."/>
            <person name="Taylor R.G."/>
            <person name="Tickle C."/>
            <person name="Wilson S.A."/>
        </authorList>
    </citation>
    <scope>NUCLEOTIDE SEQUENCE [LARGE SCALE MRNA] OF 1-57</scope>
    <source>
        <tissue>Chondrocyte</tissue>
    </source>
</reference>
<reference key="3">
    <citation type="journal article" date="2009" name="Neuron">
        <title>FARP1 promotes the dendritic growth of spinal motor neuron subtypes through transmembrane Semaphorin6A and PlexinA4 signaling.</title>
        <authorList>
            <person name="Zhuang B."/>
            <person name="Su Y.S."/>
            <person name="Sockanathan S."/>
        </authorList>
    </citation>
    <scope>FUNCTION</scope>
    <scope>INTERACTION WITH PLXNA4</scope>
    <scope>SUBCELLULAR LOCATION</scope>
    <scope>INDUCTION</scope>
    <scope>TISSUE SPECIFICITY</scope>
</reference>
<sequence length="1046" mass="119705">MGETEQRPTAGSRLGAQENAGISTLEHGQKPPLTPPGKLISIKIQMLDDTQETFEVPQRAPGKVLHDAVCNHLNLVEGDYFGLEFPDHKKMMVWLDLLKPVMKQIRRPKHVVVKFVVKFFPPDHAQLQEELTRYLFALQVKQDLAQGRLTCNDTSTALLISHIVQSEIGDFDETIDREHLAKNKYIPQQEALEDKIMEFHRKHTGQTPAESDFQLLEIARRLEMYGIRLHPAKDREGTKINLAVANTGILVFQGHTKINAFNWAKVRKLSFKRKRFLIKLRPDVNSSFQDTLEFLMASRDFCKSFWKICVEHHAFFRLFEEPKPKPKPVLFSRGSSFRFSGRTQKQVLDYVKEGGHKKVQFERKHSKIRSIRSLTAQPSEQHAEVPKQSFQSSSFAYGDDSDAAAVQSCQQGKELKASTEDTGQHKSPSLKKSPKEGRKVDGAVVSAVEEEEEAATDRMQQNRPQSQQPSTAGSLTGSPHLSELSINSQGGPSVANMSLSPNLSPDAKQSSPLISPLLNDPSCIRTEEEEEVKKKRFPTEKAYFIAKEVATTERTYLKDLEVITSWFQSAVSKEDCMPETLKNLIFSNFEPLHKFHTGFLKEIEQRLALWEGRSNAHIKGGHQRIGDVMLKNIQGMKQLTIHLWKHNEILTELENGIKNSRKLETFCRDFELQKVCYLPLNTFLLRPLHRLMHYKQIMERLCKHYPPNHVDFRDSRAALAEITEMMAQLHGNMIKMENFQKLHELKKDLIGIDNLVIPGREFIRLGSLSKLSGKGLQQRMFFLFNDILLYTSRGLTASNQFKVHGHLPLYGMTIEDSEEEWGVPHCLTLRGQQQSIIVAASTRAEIDKWIEDIQMAIDLAEKSSDPVPELLASSPPDNKSPDETTVDQESEDDLSASRTSLERQSPHRGNTTVHVCWHRNTSVSMIDFSIAVENQLSGNLLRKFKNSNGWQKLWVVFTNFCMFFYKSHQDNHPLASLPLLGYSLTIPSESENIHKDYVFKLHFKSHVYYFRAESEYTFERWMEVIRSATSSALRTRALSHREPHTY</sequence>
<protein>
    <recommendedName>
        <fullName>FERM, ARHGEF and pleckstrin domain-containing protein 1</fullName>
    </recommendedName>
    <alternativeName>
        <fullName>FERM, RhoGEF and pleckstrin domain-containing protein 1</fullName>
    </alternativeName>
</protein>
<feature type="chain" id="PRO_0000422338" description="FERM, ARHGEF and pleckstrin domain-containing protein 1">
    <location>
        <begin position="1"/>
        <end position="1046"/>
    </location>
</feature>
<feature type="domain" description="FERM" evidence="3">
    <location>
        <begin position="40"/>
        <end position="320"/>
    </location>
</feature>
<feature type="domain" description="DH" evidence="2">
    <location>
        <begin position="541"/>
        <end position="732"/>
    </location>
</feature>
<feature type="domain" description="PH 1" evidence="4">
    <location>
        <begin position="761"/>
        <end position="858"/>
    </location>
</feature>
<feature type="domain" description="PH 2" evidence="4">
    <location>
        <begin position="933"/>
        <end position="1030"/>
    </location>
</feature>
<feature type="region of interest" description="Disordered" evidence="5">
    <location>
        <begin position="374"/>
        <end position="522"/>
    </location>
</feature>
<feature type="region of interest" description="Disordered" evidence="5">
    <location>
        <begin position="864"/>
        <end position="907"/>
    </location>
</feature>
<feature type="compositionally biased region" description="Basic and acidic residues" evidence="5">
    <location>
        <begin position="413"/>
        <end position="424"/>
    </location>
</feature>
<feature type="compositionally biased region" description="Polar residues" evidence="5">
    <location>
        <begin position="458"/>
        <end position="513"/>
    </location>
</feature>
<feature type="compositionally biased region" description="Acidic residues" evidence="5">
    <location>
        <begin position="884"/>
        <end position="894"/>
    </location>
</feature>
<dbReference type="EMBL" id="AADN02029275">
    <property type="status" value="NOT_ANNOTATED_CDS"/>
    <property type="molecule type" value="Genomic_DNA"/>
</dbReference>
<dbReference type="EMBL" id="AADN02029276">
    <property type="status" value="NOT_ANNOTATED_CDS"/>
    <property type="molecule type" value="Genomic_DNA"/>
</dbReference>
<dbReference type="EMBL" id="AADN02029277">
    <property type="status" value="NOT_ANNOTATED_CDS"/>
    <property type="molecule type" value="Genomic_DNA"/>
</dbReference>
<dbReference type="EMBL" id="AADN02029278">
    <property type="status" value="NOT_ANNOTATED_CDS"/>
    <property type="molecule type" value="Genomic_DNA"/>
</dbReference>
<dbReference type="EMBL" id="AADN02029279">
    <property type="status" value="NOT_ANNOTATED_CDS"/>
    <property type="molecule type" value="Genomic_DNA"/>
</dbReference>
<dbReference type="EMBL" id="CR353349">
    <property type="status" value="NOT_ANNOTATED_CDS"/>
    <property type="molecule type" value="mRNA"/>
</dbReference>
<dbReference type="SMR" id="F1P065"/>
<dbReference type="FunCoup" id="F1P065">
    <property type="interactions" value="446"/>
</dbReference>
<dbReference type="STRING" id="9031.ENSGALP00000040815"/>
<dbReference type="PaxDb" id="9031-ENSGALP00000027234"/>
<dbReference type="VEuPathDB" id="HostDB:geneid_418781"/>
<dbReference type="eggNOG" id="KOG3531">
    <property type="taxonomic scope" value="Eukaryota"/>
</dbReference>
<dbReference type="InParanoid" id="F1P065"/>
<dbReference type="OrthoDB" id="9990815at2759"/>
<dbReference type="TreeFam" id="TF351276"/>
<dbReference type="Proteomes" id="UP000000539">
    <property type="component" value="Unassembled WGS sequence"/>
</dbReference>
<dbReference type="GO" id="GO:0009898">
    <property type="term" value="C:cytoplasmic side of plasma membrane"/>
    <property type="evidence" value="ECO:0000250"/>
    <property type="project" value="UniProtKB"/>
</dbReference>
<dbReference type="GO" id="GO:0005856">
    <property type="term" value="C:cytoskeleton"/>
    <property type="evidence" value="ECO:0007669"/>
    <property type="project" value="InterPro"/>
</dbReference>
<dbReference type="GO" id="GO:0005829">
    <property type="term" value="C:cytosol"/>
    <property type="evidence" value="ECO:0000250"/>
    <property type="project" value="UniProtKB"/>
</dbReference>
<dbReference type="GO" id="GO:0030425">
    <property type="term" value="C:dendrite"/>
    <property type="evidence" value="ECO:0000250"/>
    <property type="project" value="UniProtKB"/>
</dbReference>
<dbReference type="GO" id="GO:0043197">
    <property type="term" value="C:dendritic spine"/>
    <property type="evidence" value="ECO:0007669"/>
    <property type="project" value="UniProtKB-SubCell"/>
</dbReference>
<dbReference type="GO" id="GO:0030175">
    <property type="term" value="C:filopodium"/>
    <property type="evidence" value="ECO:0007669"/>
    <property type="project" value="UniProtKB-SubCell"/>
</dbReference>
<dbReference type="GO" id="GO:0008092">
    <property type="term" value="F:cytoskeletal protein binding"/>
    <property type="evidence" value="ECO:0007669"/>
    <property type="project" value="InterPro"/>
</dbReference>
<dbReference type="GO" id="GO:0005085">
    <property type="term" value="F:guanyl-nucleotide exchange factor activity"/>
    <property type="evidence" value="ECO:0000250"/>
    <property type="project" value="UniProtKB"/>
</dbReference>
<dbReference type="GO" id="GO:0048813">
    <property type="term" value="P:dendrite morphogenesis"/>
    <property type="evidence" value="ECO:0000250"/>
    <property type="project" value="UniProtKB"/>
</dbReference>
<dbReference type="GO" id="GO:0007416">
    <property type="term" value="P:synapse assembly"/>
    <property type="evidence" value="ECO:0000250"/>
    <property type="project" value="UniProtKB"/>
</dbReference>
<dbReference type="CDD" id="cd14473">
    <property type="entry name" value="FERM_B-lobe"/>
    <property type="match status" value="1"/>
</dbReference>
<dbReference type="CDD" id="cd13193">
    <property type="entry name" value="FERM_C_FARP1-like"/>
    <property type="match status" value="1"/>
</dbReference>
<dbReference type="CDD" id="cd17189">
    <property type="entry name" value="FERM_F1_FARP1"/>
    <property type="match status" value="1"/>
</dbReference>
<dbReference type="CDD" id="cd01220">
    <property type="entry name" value="PH1_FARP1-like"/>
    <property type="match status" value="1"/>
</dbReference>
<dbReference type="CDD" id="cd13235">
    <property type="entry name" value="PH2_FARP1-like"/>
    <property type="match status" value="1"/>
</dbReference>
<dbReference type="CDD" id="cd00160">
    <property type="entry name" value="RhoGEF"/>
    <property type="match status" value="1"/>
</dbReference>
<dbReference type="FunFam" id="2.30.29.30:FF:000002">
    <property type="entry name" value="Band 4.1-like protein 5 isoform 1"/>
    <property type="match status" value="1"/>
</dbReference>
<dbReference type="FunFam" id="3.10.20.90:FF:000040">
    <property type="entry name" value="FERM, RhoGEF and pleckstrin domain-containing protein"/>
    <property type="match status" value="1"/>
</dbReference>
<dbReference type="FunFam" id="1.20.80.10:FF:000005">
    <property type="entry name" value="FERM, RhoGEF and pleckstrin domain-containing protein 1"/>
    <property type="match status" value="1"/>
</dbReference>
<dbReference type="FunFam" id="1.20.900.10:FF:000021">
    <property type="entry name" value="FERM, RhoGEF and pleckstrin domain-containing protein 1"/>
    <property type="match status" value="1"/>
</dbReference>
<dbReference type="FunFam" id="2.30.29.30:FF:000046">
    <property type="entry name" value="FERM, RhoGEF and pleckstrin domain-containing protein 1"/>
    <property type="match status" value="1"/>
</dbReference>
<dbReference type="Gene3D" id="1.20.80.10">
    <property type="match status" value="1"/>
</dbReference>
<dbReference type="Gene3D" id="1.20.900.10">
    <property type="entry name" value="Dbl homology (DH) domain"/>
    <property type="match status" value="1"/>
</dbReference>
<dbReference type="Gene3D" id="3.10.20.90">
    <property type="entry name" value="Phosphatidylinositol 3-kinase Catalytic Subunit, Chain A, domain 1"/>
    <property type="match status" value="1"/>
</dbReference>
<dbReference type="Gene3D" id="2.30.29.30">
    <property type="entry name" value="Pleckstrin-homology domain (PH domain)/Phosphotyrosine-binding domain (PTB)"/>
    <property type="match status" value="3"/>
</dbReference>
<dbReference type="InterPro" id="IPR019749">
    <property type="entry name" value="Band_41_domain"/>
</dbReference>
<dbReference type="InterPro" id="IPR035899">
    <property type="entry name" value="DBL_dom_sf"/>
</dbReference>
<dbReference type="InterPro" id="IPR000219">
    <property type="entry name" value="DH_dom"/>
</dbReference>
<dbReference type="InterPro" id="IPR000798">
    <property type="entry name" value="Ez/rad/moesin-like"/>
</dbReference>
<dbReference type="InterPro" id="IPR014847">
    <property type="entry name" value="FA"/>
</dbReference>
<dbReference type="InterPro" id="IPR041788">
    <property type="entry name" value="FARP1/FARP2/FRMD7_FERM_C"/>
</dbReference>
<dbReference type="InterPro" id="IPR014352">
    <property type="entry name" value="FERM/acyl-CoA-bd_prot_sf"/>
</dbReference>
<dbReference type="InterPro" id="IPR035963">
    <property type="entry name" value="FERM_2"/>
</dbReference>
<dbReference type="InterPro" id="IPR019748">
    <property type="entry name" value="FERM_central"/>
</dbReference>
<dbReference type="InterPro" id="IPR019747">
    <property type="entry name" value="FERM_CS"/>
</dbReference>
<dbReference type="InterPro" id="IPR000299">
    <property type="entry name" value="FERM_domain"/>
</dbReference>
<dbReference type="InterPro" id="IPR018979">
    <property type="entry name" value="FERM_N"/>
</dbReference>
<dbReference type="InterPro" id="IPR018980">
    <property type="entry name" value="FERM_PH-like_C"/>
</dbReference>
<dbReference type="InterPro" id="IPR011993">
    <property type="entry name" value="PH-like_dom_sf"/>
</dbReference>
<dbReference type="InterPro" id="IPR001849">
    <property type="entry name" value="PH_domain"/>
</dbReference>
<dbReference type="InterPro" id="IPR051835">
    <property type="entry name" value="RAC1-GEF"/>
</dbReference>
<dbReference type="InterPro" id="IPR055251">
    <property type="entry name" value="SOS1_NGEF_PH"/>
</dbReference>
<dbReference type="InterPro" id="IPR029071">
    <property type="entry name" value="Ubiquitin-like_domsf"/>
</dbReference>
<dbReference type="PANTHER" id="PTHR45858">
    <property type="entry name" value="FERM DOMAIN CONTAINING PROTEIN"/>
    <property type="match status" value="1"/>
</dbReference>
<dbReference type="PANTHER" id="PTHR45858:SF2">
    <property type="entry name" value="FERM, ARHGEF AND PLECKSTRIN DOMAIN-CONTAINING PROTEIN 1"/>
    <property type="match status" value="1"/>
</dbReference>
<dbReference type="Pfam" id="PF08736">
    <property type="entry name" value="FA"/>
    <property type="match status" value="1"/>
</dbReference>
<dbReference type="Pfam" id="PF09380">
    <property type="entry name" value="FERM_C"/>
    <property type="match status" value="1"/>
</dbReference>
<dbReference type="Pfam" id="PF00373">
    <property type="entry name" value="FERM_M"/>
    <property type="match status" value="1"/>
</dbReference>
<dbReference type="Pfam" id="PF09379">
    <property type="entry name" value="FERM_N"/>
    <property type="match status" value="1"/>
</dbReference>
<dbReference type="Pfam" id="PF00169">
    <property type="entry name" value="PH"/>
    <property type="match status" value="1"/>
</dbReference>
<dbReference type="Pfam" id="PF00621">
    <property type="entry name" value="RhoGEF"/>
    <property type="match status" value="1"/>
</dbReference>
<dbReference type="Pfam" id="PF22697">
    <property type="entry name" value="SOS1_NGEF_PH"/>
    <property type="match status" value="1"/>
</dbReference>
<dbReference type="PRINTS" id="PR00935">
    <property type="entry name" value="BAND41"/>
</dbReference>
<dbReference type="PRINTS" id="PR00661">
    <property type="entry name" value="ERMFAMILY"/>
</dbReference>
<dbReference type="SMART" id="SM00295">
    <property type="entry name" value="B41"/>
    <property type="match status" value="1"/>
</dbReference>
<dbReference type="SMART" id="SM01195">
    <property type="entry name" value="FA"/>
    <property type="match status" value="1"/>
</dbReference>
<dbReference type="SMART" id="SM01196">
    <property type="entry name" value="FERM_C"/>
    <property type="match status" value="1"/>
</dbReference>
<dbReference type="SMART" id="SM00233">
    <property type="entry name" value="PH"/>
    <property type="match status" value="2"/>
</dbReference>
<dbReference type="SMART" id="SM00325">
    <property type="entry name" value="RhoGEF"/>
    <property type="match status" value="1"/>
</dbReference>
<dbReference type="SUPFAM" id="SSF48065">
    <property type="entry name" value="DBL homology domain (DH-domain)"/>
    <property type="match status" value="1"/>
</dbReference>
<dbReference type="SUPFAM" id="SSF50729">
    <property type="entry name" value="PH domain-like"/>
    <property type="match status" value="3"/>
</dbReference>
<dbReference type="SUPFAM" id="SSF47031">
    <property type="entry name" value="Second domain of FERM"/>
    <property type="match status" value="1"/>
</dbReference>
<dbReference type="SUPFAM" id="SSF54236">
    <property type="entry name" value="Ubiquitin-like"/>
    <property type="match status" value="1"/>
</dbReference>
<dbReference type="PROSITE" id="PS50010">
    <property type="entry name" value="DH_2"/>
    <property type="match status" value="1"/>
</dbReference>
<dbReference type="PROSITE" id="PS00660">
    <property type="entry name" value="FERM_1"/>
    <property type="match status" value="1"/>
</dbReference>
<dbReference type="PROSITE" id="PS50057">
    <property type="entry name" value="FERM_3"/>
    <property type="match status" value="1"/>
</dbReference>
<dbReference type="PROSITE" id="PS50003">
    <property type="entry name" value="PH_DOMAIN"/>
    <property type="match status" value="2"/>
</dbReference>
<name>FARP1_CHICK</name>
<proteinExistence type="evidence at protein level"/>
<comment type="function">
    <text evidence="1 6">Functions as a guanine nucleotide exchange factor for RAC1 (By similarity). Plays a role in semaphorin signaling via its interaction with PLXNA4. Plays a role in the assembly and disassembly of dendritic filopodia, the formation of dendritic spines, regulation of dendrite length and ultimately the formation of synapses.</text>
</comment>
<comment type="subunit">
    <text evidence="6">Interacts with PLXNA4.</text>
</comment>
<comment type="subcellular location">
    <subcellularLocation>
        <location evidence="1">Cell membrane</location>
        <topology evidence="1">Peripheral membrane protein</topology>
        <orientation evidence="1">Cytoplasmic side</orientation>
    </subcellularLocation>
    <subcellularLocation>
        <location evidence="1">Synapse</location>
    </subcellularLocation>
    <subcellularLocation>
        <location evidence="1">Synapse</location>
        <location evidence="1">Synaptosome</location>
    </subcellularLocation>
    <subcellularLocation>
        <location evidence="6">Cytoplasm</location>
        <location evidence="6">Cytosol</location>
    </subcellularLocation>
    <subcellularLocation>
        <location evidence="1">Cell projection</location>
        <location evidence="1">Filopodium</location>
    </subcellularLocation>
    <subcellularLocation>
        <location evidence="6">Cell projection</location>
        <location evidence="6">Dendrite</location>
    </subcellularLocation>
    <subcellularLocation>
        <location evidence="1">Cell projection</location>
        <location evidence="1">Dendritic spine</location>
    </subcellularLocation>
</comment>
<comment type="tissue specificity">
    <text evidence="6">Detected in lateral motor column motor neurons and in preganglionic autonomic motor neurons of the column of Terni in the embryonic spinal cord (at protein level).</text>
</comment>
<comment type="induction">
    <text evidence="6">Up-regulated by retinol.</text>
</comment>
<comment type="domain">
    <text evidence="1">Intramolecular interaction between the DH domain and the PH domains can stabilize the protein in an autoinhibited conformation.</text>
</comment>
<gene>
    <name type="primary">FARP1</name>
</gene>